<protein>
    <recommendedName>
        <fullName evidence="1">Single-stranded DNA-binding protein</fullName>
        <shortName evidence="1">SSB</shortName>
    </recommendedName>
</protein>
<gene>
    <name type="primary">ssb</name>
    <name type="ordered locus">NMB1460</name>
</gene>
<accession>P66849</accession>
<accession>Q9JRF8</accession>
<keyword id="KW-0227">DNA damage</keyword>
<keyword id="KW-0233">DNA recombination</keyword>
<keyword id="KW-0234">DNA repair</keyword>
<keyword id="KW-0235">DNA replication</keyword>
<keyword id="KW-0238">DNA-binding</keyword>
<keyword id="KW-1185">Reference proteome</keyword>
<name>SSB_NEIMB</name>
<sequence length="174" mass="19453">MSLNKVILIGRLGRDPEVRYMPNGEAVCNFSVATSETWNDRNGQRVERTEWHNITMYRKLAEIAGQYLKKGGLVYLEGRIQSRKYQGKDGIERTAYDIVANEMKMLGGRNENSGGAPYEEGYGQSQEAYQRPAQQSRQPASDAPSHPQEAPAAPRRQPVPAAAPVEDIDDDIPF</sequence>
<proteinExistence type="inferred from homology"/>
<dbReference type="EMBL" id="AE002098">
    <property type="protein sequence ID" value="AAF41819.1"/>
    <property type="molecule type" value="Genomic_DNA"/>
</dbReference>
<dbReference type="PIR" id="A81080">
    <property type="entry name" value="A81080"/>
</dbReference>
<dbReference type="RefSeq" id="NP_274471.1">
    <property type="nucleotide sequence ID" value="NC_003112.2"/>
</dbReference>
<dbReference type="RefSeq" id="WP_002212976.1">
    <property type="nucleotide sequence ID" value="NC_003112.2"/>
</dbReference>
<dbReference type="SMR" id="P66849"/>
<dbReference type="FunCoup" id="P66849">
    <property type="interactions" value="402"/>
</dbReference>
<dbReference type="STRING" id="122586.NMB1460"/>
<dbReference type="PaxDb" id="122586-NMB1460"/>
<dbReference type="KEGG" id="nme:NMB1460"/>
<dbReference type="PATRIC" id="fig|122586.8.peg.1843"/>
<dbReference type="HOGENOM" id="CLU_078758_0_1_4"/>
<dbReference type="InParanoid" id="P66849"/>
<dbReference type="OrthoDB" id="9809878at2"/>
<dbReference type="Proteomes" id="UP000000425">
    <property type="component" value="Chromosome"/>
</dbReference>
<dbReference type="GO" id="GO:0009295">
    <property type="term" value="C:nucleoid"/>
    <property type="evidence" value="ECO:0000318"/>
    <property type="project" value="GO_Central"/>
</dbReference>
<dbReference type="GO" id="GO:0008047">
    <property type="term" value="F:enzyme activator activity"/>
    <property type="evidence" value="ECO:0000318"/>
    <property type="project" value="GO_Central"/>
</dbReference>
<dbReference type="GO" id="GO:0003697">
    <property type="term" value="F:single-stranded DNA binding"/>
    <property type="evidence" value="ECO:0000318"/>
    <property type="project" value="GO_Central"/>
</dbReference>
<dbReference type="GO" id="GO:0006310">
    <property type="term" value="P:DNA recombination"/>
    <property type="evidence" value="ECO:0007669"/>
    <property type="project" value="UniProtKB-UniRule"/>
</dbReference>
<dbReference type="GO" id="GO:0006281">
    <property type="term" value="P:DNA repair"/>
    <property type="evidence" value="ECO:0007669"/>
    <property type="project" value="UniProtKB-UniRule"/>
</dbReference>
<dbReference type="GO" id="GO:0006260">
    <property type="term" value="P:DNA replication"/>
    <property type="evidence" value="ECO:0000318"/>
    <property type="project" value="GO_Central"/>
</dbReference>
<dbReference type="CDD" id="cd04496">
    <property type="entry name" value="SSB_OBF"/>
    <property type="match status" value="1"/>
</dbReference>
<dbReference type="FunFam" id="2.40.50.140:FF:000355">
    <property type="entry name" value="Single-stranded DNA-binding protein"/>
    <property type="match status" value="1"/>
</dbReference>
<dbReference type="Gene3D" id="2.40.50.140">
    <property type="entry name" value="Nucleic acid-binding proteins"/>
    <property type="match status" value="1"/>
</dbReference>
<dbReference type="HAMAP" id="MF_00984">
    <property type="entry name" value="SSB"/>
    <property type="match status" value="1"/>
</dbReference>
<dbReference type="InterPro" id="IPR012340">
    <property type="entry name" value="NA-bd_OB-fold"/>
</dbReference>
<dbReference type="InterPro" id="IPR000424">
    <property type="entry name" value="Primosome_PriB/ssb"/>
</dbReference>
<dbReference type="InterPro" id="IPR011344">
    <property type="entry name" value="ssDNA-bd"/>
</dbReference>
<dbReference type="NCBIfam" id="TIGR00621">
    <property type="entry name" value="ssb"/>
    <property type="match status" value="1"/>
</dbReference>
<dbReference type="PANTHER" id="PTHR10302">
    <property type="entry name" value="SINGLE-STRANDED DNA-BINDING PROTEIN"/>
    <property type="match status" value="1"/>
</dbReference>
<dbReference type="PANTHER" id="PTHR10302:SF27">
    <property type="entry name" value="SINGLE-STRANDED DNA-BINDING PROTEIN"/>
    <property type="match status" value="1"/>
</dbReference>
<dbReference type="Pfam" id="PF00436">
    <property type="entry name" value="SSB"/>
    <property type="match status" value="1"/>
</dbReference>
<dbReference type="PIRSF" id="PIRSF002070">
    <property type="entry name" value="SSB"/>
    <property type="match status" value="1"/>
</dbReference>
<dbReference type="SUPFAM" id="SSF50249">
    <property type="entry name" value="Nucleic acid-binding proteins"/>
    <property type="match status" value="1"/>
</dbReference>
<dbReference type="PROSITE" id="PS50935">
    <property type="entry name" value="SSB"/>
    <property type="match status" value="1"/>
</dbReference>
<feature type="chain" id="PRO_0000096071" description="Single-stranded DNA-binding protein">
    <location>
        <begin position="1"/>
        <end position="174"/>
    </location>
</feature>
<feature type="domain" description="SSB" evidence="1">
    <location>
        <begin position="3"/>
        <end position="107"/>
    </location>
</feature>
<feature type="region of interest" description="Disordered" evidence="2">
    <location>
        <begin position="108"/>
        <end position="174"/>
    </location>
</feature>
<feature type="short sequence motif" description="Important for interaction with partner proteins" evidence="1">
    <location>
        <begin position="169"/>
        <end position="174"/>
    </location>
</feature>
<feature type="compositionally biased region" description="Polar residues" evidence="2">
    <location>
        <begin position="123"/>
        <end position="139"/>
    </location>
</feature>
<feature type="compositionally biased region" description="Low complexity" evidence="2">
    <location>
        <begin position="147"/>
        <end position="165"/>
    </location>
</feature>
<evidence type="ECO:0000255" key="1">
    <source>
        <dbReference type="HAMAP-Rule" id="MF_00984"/>
    </source>
</evidence>
<evidence type="ECO:0000256" key="2">
    <source>
        <dbReference type="SAM" id="MobiDB-lite"/>
    </source>
</evidence>
<reference key="1">
    <citation type="journal article" date="2000" name="Science">
        <title>Complete genome sequence of Neisseria meningitidis serogroup B strain MC58.</title>
        <authorList>
            <person name="Tettelin H."/>
            <person name="Saunders N.J."/>
            <person name="Heidelberg J.F."/>
            <person name="Jeffries A.C."/>
            <person name="Nelson K.E."/>
            <person name="Eisen J.A."/>
            <person name="Ketchum K.A."/>
            <person name="Hood D.W."/>
            <person name="Peden J.F."/>
            <person name="Dodson R.J."/>
            <person name="Nelson W.C."/>
            <person name="Gwinn M.L."/>
            <person name="DeBoy R.T."/>
            <person name="Peterson J.D."/>
            <person name="Hickey E.K."/>
            <person name="Haft D.H."/>
            <person name="Salzberg S.L."/>
            <person name="White O."/>
            <person name="Fleischmann R.D."/>
            <person name="Dougherty B.A."/>
            <person name="Mason T.M."/>
            <person name="Ciecko A."/>
            <person name="Parksey D.S."/>
            <person name="Blair E."/>
            <person name="Cittone H."/>
            <person name="Clark E.B."/>
            <person name="Cotton M.D."/>
            <person name="Utterback T.R."/>
            <person name="Khouri H.M."/>
            <person name="Qin H."/>
            <person name="Vamathevan J.J."/>
            <person name="Gill J."/>
            <person name="Scarlato V."/>
            <person name="Masignani V."/>
            <person name="Pizza M."/>
            <person name="Grandi G."/>
            <person name="Sun L."/>
            <person name="Smith H.O."/>
            <person name="Fraser C.M."/>
            <person name="Moxon E.R."/>
            <person name="Rappuoli R."/>
            <person name="Venter J.C."/>
        </authorList>
    </citation>
    <scope>NUCLEOTIDE SEQUENCE [LARGE SCALE GENOMIC DNA]</scope>
    <source>
        <strain>ATCC BAA-335 / MC58</strain>
    </source>
</reference>
<organism>
    <name type="scientific">Neisseria meningitidis serogroup B (strain ATCC BAA-335 / MC58)</name>
    <dbReference type="NCBI Taxonomy" id="122586"/>
    <lineage>
        <taxon>Bacteria</taxon>
        <taxon>Pseudomonadati</taxon>
        <taxon>Pseudomonadota</taxon>
        <taxon>Betaproteobacteria</taxon>
        <taxon>Neisseriales</taxon>
        <taxon>Neisseriaceae</taxon>
        <taxon>Neisseria</taxon>
    </lineage>
</organism>
<comment type="function">
    <text evidence="1">Plays an important role in DNA replication, recombination and repair. Binds to ssDNA and to an array of partner proteins to recruit them to their sites of action during DNA metabolism.</text>
</comment>
<comment type="subunit">
    <text evidence="1">Homotetramer.</text>
</comment>